<reference key="1">
    <citation type="journal article" date="2006" name="Gene Expr. Patterns">
        <title>Expression of two insm1-like genes in the developing zebrafish nervous system.</title>
        <authorList>
            <person name="Lukowski C.M."/>
            <person name="Ritzel R.G."/>
            <person name="Waskiewicz A.J."/>
        </authorList>
    </citation>
    <scope>NUCLEOTIDE SEQUENCE [MRNA]</scope>
    <scope>DEVELOPMENTAL STAGE</scope>
    <source>
        <strain>AB</strain>
    </source>
</reference>
<reference key="2">
    <citation type="journal article" date="2013" name="Nature">
        <title>The zebrafish reference genome sequence and its relationship to the human genome.</title>
        <authorList>
            <person name="Howe K."/>
            <person name="Clark M.D."/>
            <person name="Torroja C.F."/>
            <person name="Torrance J."/>
            <person name="Berthelot C."/>
            <person name="Muffato M."/>
            <person name="Collins J.E."/>
            <person name="Humphray S."/>
            <person name="McLaren K."/>
            <person name="Matthews L."/>
            <person name="McLaren S."/>
            <person name="Sealy I."/>
            <person name="Caccamo M."/>
            <person name="Churcher C."/>
            <person name="Scott C."/>
            <person name="Barrett J.C."/>
            <person name="Koch R."/>
            <person name="Rauch G.J."/>
            <person name="White S."/>
            <person name="Chow W."/>
            <person name="Kilian B."/>
            <person name="Quintais L.T."/>
            <person name="Guerra-Assuncao J.A."/>
            <person name="Zhou Y."/>
            <person name="Gu Y."/>
            <person name="Yen J."/>
            <person name="Vogel J.H."/>
            <person name="Eyre T."/>
            <person name="Redmond S."/>
            <person name="Banerjee R."/>
            <person name="Chi J."/>
            <person name="Fu B."/>
            <person name="Langley E."/>
            <person name="Maguire S.F."/>
            <person name="Laird G.K."/>
            <person name="Lloyd D."/>
            <person name="Kenyon E."/>
            <person name="Donaldson S."/>
            <person name="Sehra H."/>
            <person name="Almeida-King J."/>
            <person name="Loveland J."/>
            <person name="Trevanion S."/>
            <person name="Jones M."/>
            <person name="Quail M."/>
            <person name="Willey D."/>
            <person name="Hunt A."/>
            <person name="Burton J."/>
            <person name="Sims S."/>
            <person name="McLay K."/>
            <person name="Plumb B."/>
            <person name="Davis J."/>
            <person name="Clee C."/>
            <person name="Oliver K."/>
            <person name="Clark R."/>
            <person name="Riddle C."/>
            <person name="Elliot D."/>
            <person name="Threadgold G."/>
            <person name="Harden G."/>
            <person name="Ware D."/>
            <person name="Begum S."/>
            <person name="Mortimore B."/>
            <person name="Kerry G."/>
            <person name="Heath P."/>
            <person name="Phillimore B."/>
            <person name="Tracey A."/>
            <person name="Corby N."/>
            <person name="Dunn M."/>
            <person name="Johnson C."/>
            <person name="Wood J."/>
            <person name="Clark S."/>
            <person name="Pelan S."/>
            <person name="Griffiths G."/>
            <person name="Smith M."/>
            <person name="Glithero R."/>
            <person name="Howden P."/>
            <person name="Barker N."/>
            <person name="Lloyd C."/>
            <person name="Stevens C."/>
            <person name="Harley J."/>
            <person name="Holt K."/>
            <person name="Panagiotidis G."/>
            <person name="Lovell J."/>
            <person name="Beasley H."/>
            <person name="Henderson C."/>
            <person name="Gordon D."/>
            <person name="Auger K."/>
            <person name="Wright D."/>
            <person name="Collins J."/>
            <person name="Raisen C."/>
            <person name="Dyer L."/>
            <person name="Leung K."/>
            <person name="Robertson L."/>
            <person name="Ambridge K."/>
            <person name="Leongamornlert D."/>
            <person name="McGuire S."/>
            <person name="Gilderthorp R."/>
            <person name="Griffiths C."/>
            <person name="Manthravadi D."/>
            <person name="Nichol S."/>
            <person name="Barker G."/>
            <person name="Whitehead S."/>
            <person name="Kay M."/>
            <person name="Brown J."/>
            <person name="Murnane C."/>
            <person name="Gray E."/>
            <person name="Humphries M."/>
            <person name="Sycamore N."/>
            <person name="Barker D."/>
            <person name="Saunders D."/>
            <person name="Wallis J."/>
            <person name="Babbage A."/>
            <person name="Hammond S."/>
            <person name="Mashreghi-Mohammadi M."/>
            <person name="Barr L."/>
            <person name="Martin S."/>
            <person name="Wray P."/>
            <person name="Ellington A."/>
            <person name="Matthews N."/>
            <person name="Ellwood M."/>
            <person name="Woodmansey R."/>
            <person name="Clark G."/>
            <person name="Cooper J."/>
            <person name="Tromans A."/>
            <person name="Grafham D."/>
            <person name="Skuce C."/>
            <person name="Pandian R."/>
            <person name="Andrews R."/>
            <person name="Harrison E."/>
            <person name="Kimberley A."/>
            <person name="Garnett J."/>
            <person name="Fosker N."/>
            <person name="Hall R."/>
            <person name="Garner P."/>
            <person name="Kelly D."/>
            <person name="Bird C."/>
            <person name="Palmer S."/>
            <person name="Gehring I."/>
            <person name="Berger A."/>
            <person name="Dooley C.M."/>
            <person name="Ersan-Urun Z."/>
            <person name="Eser C."/>
            <person name="Geiger H."/>
            <person name="Geisler M."/>
            <person name="Karotki L."/>
            <person name="Kirn A."/>
            <person name="Konantz J."/>
            <person name="Konantz M."/>
            <person name="Oberlander M."/>
            <person name="Rudolph-Geiger S."/>
            <person name="Teucke M."/>
            <person name="Lanz C."/>
            <person name="Raddatz G."/>
            <person name="Osoegawa K."/>
            <person name="Zhu B."/>
            <person name="Rapp A."/>
            <person name="Widaa S."/>
            <person name="Langford C."/>
            <person name="Yang F."/>
            <person name="Schuster S.C."/>
            <person name="Carter N.P."/>
            <person name="Harrow J."/>
            <person name="Ning Z."/>
            <person name="Herrero J."/>
            <person name="Searle S.M."/>
            <person name="Enright A."/>
            <person name="Geisler R."/>
            <person name="Plasterk R.H."/>
            <person name="Lee C."/>
            <person name="Westerfield M."/>
            <person name="de Jong P.J."/>
            <person name="Zon L.I."/>
            <person name="Postlethwait J.H."/>
            <person name="Nusslein-Volhard C."/>
            <person name="Hubbard T.J."/>
            <person name="Roest Crollius H."/>
            <person name="Rogers J."/>
            <person name="Stemple D.L."/>
        </authorList>
    </citation>
    <scope>NUCLEOTIDE SEQUENCE [LARGE SCALE GENOMIC DNA]</scope>
    <source>
        <strain>Tuebingen</strain>
    </source>
</reference>
<reference key="3">
    <citation type="submission" date="2003-06" db="EMBL/GenBank/DDBJ databases">
        <authorList>
            <consortium name="NIH - Zebrafish Gene Collection (ZGC) project"/>
        </authorList>
    </citation>
    <scope>NUCLEOTIDE SEQUENCE [LARGE SCALE MRNA]</scope>
    <source>
        <tissue>Embryo</tissue>
    </source>
</reference>
<gene>
    <name type="primary">insm1b</name>
</gene>
<feature type="chain" id="PRO_0000425455" description="Insulinoma-associated protein 1b">
    <location>
        <begin position="1"/>
        <end position="453"/>
    </location>
</feature>
<feature type="zinc finger region" description="C2H2-type 1" evidence="3">
    <location>
        <begin position="252"/>
        <end position="274"/>
    </location>
</feature>
<feature type="zinc finger region" description="C2H2-type 2" evidence="3">
    <location>
        <begin position="321"/>
        <end position="343"/>
    </location>
</feature>
<feature type="zinc finger region" description="C2H2-type 3" evidence="3">
    <location>
        <begin position="383"/>
        <end position="406"/>
    </location>
</feature>
<feature type="zinc finger region" description="C2H2-type 4" evidence="3">
    <location>
        <begin position="412"/>
        <end position="435"/>
    </location>
</feature>
<feature type="region of interest" description="SNAG domain" evidence="2">
    <location>
        <begin position="1"/>
        <end position="20"/>
    </location>
</feature>
<feature type="region of interest" description="Disordered" evidence="4">
    <location>
        <begin position="140"/>
        <end position="179"/>
    </location>
</feature>
<feature type="region of interest" description="Disordered" evidence="4">
    <location>
        <begin position="298"/>
        <end position="318"/>
    </location>
</feature>
<feature type="compositionally biased region" description="Basic and acidic residues" evidence="4">
    <location>
        <begin position="162"/>
        <end position="171"/>
    </location>
</feature>
<feature type="sequence conflict" description="In Ref. 1; AAZ94624." evidence="6" ref="1">
    <original>V</original>
    <variation>I</variation>
    <location>
        <position position="16"/>
    </location>
</feature>
<feature type="sequence conflict" description="In Ref. 1; AAZ94624." evidence="6" ref="1">
    <original>Q</original>
    <variation>R</variation>
    <location>
        <position position="156"/>
    </location>
</feature>
<feature type="sequence conflict" description="In Ref. 1; AAZ94624." evidence="6" ref="1">
    <original>L</original>
    <variation>P</variation>
    <location>
        <position position="404"/>
    </location>
</feature>
<accession>Q7T3H2</accession>
<accession>Q3S5C7</accession>
<organism>
    <name type="scientific">Danio rerio</name>
    <name type="common">Zebrafish</name>
    <name type="synonym">Brachydanio rerio</name>
    <dbReference type="NCBI Taxonomy" id="7955"/>
    <lineage>
        <taxon>Eukaryota</taxon>
        <taxon>Metazoa</taxon>
        <taxon>Chordata</taxon>
        <taxon>Craniata</taxon>
        <taxon>Vertebrata</taxon>
        <taxon>Euteleostomi</taxon>
        <taxon>Actinopterygii</taxon>
        <taxon>Neopterygii</taxon>
        <taxon>Teleostei</taxon>
        <taxon>Ostariophysi</taxon>
        <taxon>Cypriniformes</taxon>
        <taxon>Danionidae</taxon>
        <taxon>Danioninae</taxon>
        <taxon>Danio</taxon>
    </lineage>
</organism>
<dbReference type="EMBL" id="DQ164185">
    <property type="protein sequence ID" value="AAZ94624.1"/>
    <property type="molecule type" value="mRNA"/>
</dbReference>
<dbReference type="EMBL" id="CR381689">
    <property type="status" value="NOT_ANNOTATED_CDS"/>
    <property type="molecule type" value="Genomic_DNA"/>
</dbReference>
<dbReference type="EMBL" id="BC053119">
    <property type="protein sequence ID" value="AAH53119.1"/>
    <property type="molecule type" value="mRNA"/>
</dbReference>
<dbReference type="RefSeq" id="NP_955952.1">
    <property type="nucleotide sequence ID" value="NM_199658.1"/>
</dbReference>
<dbReference type="FunCoup" id="Q7T3H2">
    <property type="interactions" value="17"/>
</dbReference>
<dbReference type="STRING" id="7955.ENSDARP00000069814"/>
<dbReference type="PaxDb" id="7955-ENSDARP00000069814"/>
<dbReference type="Ensembl" id="ENSDART00000075331">
    <property type="protein sequence ID" value="ENSDARP00000069814"/>
    <property type="gene ID" value="ENSDARG00000053301"/>
</dbReference>
<dbReference type="GeneID" id="323882"/>
<dbReference type="KEGG" id="dre:323882"/>
<dbReference type="AGR" id="ZFIN:ZDB-GENE-030131-2602"/>
<dbReference type="CTD" id="323882"/>
<dbReference type="ZFIN" id="ZDB-GENE-030131-2602">
    <property type="gene designation" value="insm1b"/>
</dbReference>
<dbReference type="eggNOG" id="KOG3993">
    <property type="taxonomic scope" value="Eukaryota"/>
</dbReference>
<dbReference type="HOGENOM" id="CLU_033476_1_0_1"/>
<dbReference type="InParanoid" id="Q7T3H2"/>
<dbReference type="OMA" id="CHPTEKR"/>
<dbReference type="OrthoDB" id="8953942at2759"/>
<dbReference type="PhylomeDB" id="Q7T3H2"/>
<dbReference type="TreeFam" id="TF320538"/>
<dbReference type="PRO" id="PR:Q7T3H2"/>
<dbReference type="Proteomes" id="UP000000437">
    <property type="component" value="Chromosome 17"/>
</dbReference>
<dbReference type="Bgee" id="ENSDARG00000053301">
    <property type="expression patterns" value="Expressed in larva and 39 other cell types or tissues"/>
</dbReference>
<dbReference type="GO" id="GO:0005634">
    <property type="term" value="C:nucleus"/>
    <property type="evidence" value="ECO:0000250"/>
    <property type="project" value="UniProtKB"/>
</dbReference>
<dbReference type="GO" id="GO:0017053">
    <property type="term" value="C:transcription repressor complex"/>
    <property type="evidence" value="ECO:0000250"/>
    <property type="project" value="UniProtKB"/>
</dbReference>
<dbReference type="GO" id="GO:0031490">
    <property type="term" value="F:chromatin DNA binding"/>
    <property type="evidence" value="ECO:0000250"/>
    <property type="project" value="UniProtKB"/>
</dbReference>
<dbReference type="GO" id="GO:0003700">
    <property type="term" value="F:DNA-binding transcription factor activity"/>
    <property type="evidence" value="ECO:0000250"/>
    <property type="project" value="UniProtKB"/>
</dbReference>
<dbReference type="GO" id="GO:0001227">
    <property type="term" value="F:DNA-binding transcription repressor activity, RNA polymerase II-specific"/>
    <property type="evidence" value="ECO:0000318"/>
    <property type="project" value="GO_Central"/>
</dbReference>
<dbReference type="GO" id="GO:0000978">
    <property type="term" value="F:RNA polymerase II cis-regulatory region sequence-specific DNA binding"/>
    <property type="evidence" value="ECO:0000250"/>
    <property type="project" value="UniProtKB"/>
</dbReference>
<dbReference type="GO" id="GO:0008270">
    <property type="term" value="F:zinc ion binding"/>
    <property type="evidence" value="ECO:0007669"/>
    <property type="project" value="UniProtKB-KW"/>
</dbReference>
<dbReference type="GO" id="GO:0000122">
    <property type="term" value="P:negative regulation of transcription by RNA polymerase II"/>
    <property type="evidence" value="ECO:0000250"/>
    <property type="project" value="UniProtKB"/>
</dbReference>
<dbReference type="GO" id="GO:0030182">
    <property type="term" value="P:neuron differentiation"/>
    <property type="evidence" value="ECO:0000318"/>
    <property type="project" value="GO_Central"/>
</dbReference>
<dbReference type="GO" id="GO:0003310">
    <property type="term" value="P:pancreatic A cell differentiation"/>
    <property type="evidence" value="ECO:0000250"/>
    <property type="project" value="UniProtKB"/>
</dbReference>
<dbReference type="GO" id="GO:0010564">
    <property type="term" value="P:regulation of cell cycle process"/>
    <property type="evidence" value="ECO:0000318"/>
    <property type="project" value="GO_Central"/>
</dbReference>
<dbReference type="GO" id="GO:0060290">
    <property type="term" value="P:transdifferentiation"/>
    <property type="evidence" value="ECO:0000250"/>
    <property type="project" value="UniProtKB"/>
</dbReference>
<dbReference type="GO" id="GO:0003309">
    <property type="term" value="P:type B pancreatic cell differentiation"/>
    <property type="evidence" value="ECO:0000250"/>
    <property type="project" value="UniProtKB"/>
</dbReference>
<dbReference type="FunFam" id="3.30.160.60:FF:000488">
    <property type="entry name" value="Insulinoma-associated protein 2"/>
    <property type="match status" value="1"/>
</dbReference>
<dbReference type="FunFam" id="3.30.160.60:FF:000145">
    <property type="entry name" value="Zinc finger protein 574"/>
    <property type="match status" value="1"/>
</dbReference>
<dbReference type="Gene3D" id="3.30.160.60">
    <property type="entry name" value="Classic Zinc Finger"/>
    <property type="match status" value="3"/>
</dbReference>
<dbReference type="InterPro" id="IPR042972">
    <property type="entry name" value="INSM1/2"/>
</dbReference>
<dbReference type="InterPro" id="IPR036236">
    <property type="entry name" value="Znf_C2H2_sf"/>
</dbReference>
<dbReference type="InterPro" id="IPR013087">
    <property type="entry name" value="Znf_C2H2_type"/>
</dbReference>
<dbReference type="PANTHER" id="PTHR15065">
    <property type="entry name" value="INSULINOMA-ASSOCIATED 1"/>
    <property type="match status" value="1"/>
</dbReference>
<dbReference type="PANTHER" id="PTHR15065:SF5">
    <property type="entry name" value="INSULINOMA-ASSOCIATED PROTEIN 1"/>
    <property type="match status" value="1"/>
</dbReference>
<dbReference type="Pfam" id="PF00096">
    <property type="entry name" value="zf-C2H2"/>
    <property type="match status" value="3"/>
</dbReference>
<dbReference type="SMART" id="SM00355">
    <property type="entry name" value="ZnF_C2H2"/>
    <property type="match status" value="5"/>
</dbReference>
<dbReference type="SUPFAM" id="SSF57667">
    <property type="entry name" value="beta-beta-alpha zinc fingers"/>
    <property type="match status" value="3"/>
</dbReference>
<dbReference type="PROSITE" id="PS00028">
    <property type="entry name" value="ZINC_FINGER_C2H2_1"/>
    <property type="match status" value="4"/>
</dbReference>
<dbReference type="PROSITE" id="PS50157">
    <property type="entry name" value="ZINC_FINGER_C2H2_2"/>
    <property type="match status" value="4"/>
</dbReference>
<keyword id="KW-0217">Developmental protein</keyword>
<keyword id="KW-0221">Differentiation</keyword>
<keyword id="KW-0238">DNA-binding</keyword>
<keyword id="KW-0479">Metal-binding</keyword>
<keyword id="KW-0524">Neurogenesis</keyword>
<keyword id="KW-0539">Nucleus</keyword>
<keyword id="KW-1185">Reference proteome</keyword>
<keyword id="KW-0677">Repeat</keyword>
<keyword id="KW-0804">Transcription</keyword>
<keyword id="KW-0805">Transcription regulation</keyword>
<keyword id="KW-0862">Zinc</keyword>
<keyword id="KW-0863">Zinc-finger</keyword>
<name>INS1B_DANRE</name>
<comment type="function">
    <text evidence="1">May act as a transcriptional regulator. May play a role in neurogenesis and neuroendocrine cell differentiation during embryonic development (By similarity).</text>
</comment>
<comment type="subcellular location">
    <subcellularLocation>
        <location evidence="2">Nucleus</location>
    </subcellularLocation>
</comment>
<comment type="developmental stage">
    <text evidence="5">Expressed at 10 hours post-fertilization (hpf), reach peak levels at 48 hpf and is not detectable in adult tissues. Expressed during neurogenesis between 9 and 72 hpf and in ventral endoderm region where pancreatic progenitors originate.</text>
</comment>
<comment type="similarity">
    <text evidence="6">Belongs to the INSM1 family.</text>
</comment>
<protein>
    <recommendedName>
        <fullName>Insulinoma-associated protein 1b</fullName>
    </recommendedName>
    <alternativeName>
        <fullName>Insulinoma-associated 1-like protein b</fullName>
    </alternativeName>
    <alternativeName>
        <fullName>Zinc finger protein IA-1b</fullName>
    </alternativeName>
</protein>
<proteinExistence type="evidence at transcript level"/>
<evidence type="ECO:0000250" key="1"/>
<evidence type="ECO:0000250" key="2">
    <source>
        <dbReference type="UniProtKB" id="Q63ZV0"/>
    </source>
</evidence>
<evidence type="ECO:0000255" key="3">
    <source>
        <dbReference type="PROSITE-ProRule" id="PRU00042"/>
    </source>
</evidence>
<evidence type="ECO:0000256" key="4">
    <source>
        <dbReference type="SAM" id="MobiDB-lite"/>
    </source>
</evidence>
<evidence type="ECO:0000269" key="5">
    <source>
    </source>
</evidence>
<evidence type="ECO:0000305" key="6"/>
<sequence>MPKGFLVKRNKKAALVSYRIRTDEDGGPTPECPIAQIALSSPAPSASKPDSILLAFPSAGAEAPVPVHKPVQFGNPEAVYQALYSPTRPVSKDHDRKYFERSLNLGSPISAESFPTPASLTSLDHHLLFAPVDLKIGTSNSNRSGTASGAHAPAIQTGAKRPSADAAERKVSSKSAKKPKAIRKLNFEDEVTTSPVLGLKIKEGPVDLKPRPSSGGTNKPLGEFICQLCKEEYSDPFSLAQHKCSRIVRVEYRCPECEKVFSCPANLASHRRWHKPRVQSAPKQALQPAKPFPEELRAEFPSDRDTPSPGLSESGSEDGLYDCQHCGKRFKRQAYLRKHILGHQALQNQILGEAFRSAESPDAMPSEDRQSPAPLNLSPADCLTCPACGEKLPNRASLERHLRLLHDDAQAFPCKFCPATFYSSPGLTRHINKCHPTENRQVILLQMPVRNAC</sequence>